<comment type="function">
    <text evidence="1">Forms an icosahedral capsid with a T=7 symmetry and a 50 nm diameter. The capsid is composed of 72 pentamers linked to each other by disulfide bonds and associated with L2 proteins. Binds to heparan sulfate proteoglycans on cell surface of basal layer keratinocytes to provide initial virion attachment. This binding mediates a conformational change in the virus capsid that facilitates efficient infection. The virion enters the host cell via endocytosis. During virus trafficking, L1 protein dissociates from the viral DNA and the genomic DNA is released to the host nucleus. The virion assembly takes place within the cell nucleus. Encapsulates the genomic DNA together with protein L2.</text>
</comment>
<comment type="subunit">
    <text evidence="1">Self-assembles into homopentamers. The capsid has an icosahedral symmetry and consists of 72 capsomers, with each capsomer being a pentamer of L1. Interacts with the minor capsid protein L2; this interaction is necessary for viral genome encapsidation. Interacts with protein E2; this interaction enhances E2-dependent replication and transcription activation.</text>
</comment>
<comment type="subcellular location">
    <subcellularLocation>
        <location evidence="1">Virion</location>
    </subcellularLocation>
    <subcellularLocation>
        <location evidence="1">Host nucleus</location>
    </subcellularLocation>
</comment>
<comment type="similarity">
    <text evidence="1">Belongs to the papillomaviridae L1 protein family.</text>
</comment>
<organismHost>
    <name type="scientific">Homo sapiens</name>
    <name type="common">Human</name>
    <dbReference type="NCBI Taxonomy" id="9606"/>
</organismHost>
<feature type="chain" id="PRO_0000133499" description="Major capsid protein L1">
    <location>
        <begin position="1"/>
        <end position="507"/>
    </location>
</feature>
<feature type="region of interest" description="Disordered" evidence="2">
    <location>
        <begin position="122"/>
        <end position="147"/>
    </location>
</feature>
<feature type="compositionally biased region" description="Polar residues" evidence="2">
    <location>
        <begin position="132"/>
        <end position="147"/>
    </location>
</feature>
<feature type="disulfide bond" description="Interchain (with C-439)" evidence="1">
    <location>
        <position position="175"/>
    </location>
</feature>
<feature type="disulfide bond" description="Interchain (with C-175)" evidence="1">
    <location>
        <position position="439"/>
    </location>
</feature>
<gene>
    <name evidence="1" type="primary">L1</name>
</gene>
<proteinExistence type="inferred from homology"/>
<name>VL1_HPV15</name>
<keyword id="KW-0167">Capsid protein</keyword>
<keyword id="KW-1015">Disulfide bond</keyword>
<keyword id="KW-1048">Host nucleus</keyword>
<keyword id="KW-0945">Host-virus interaction</keyword>
<keyword id="KW-0426">Late protein</keyword>
<keyword id="KW-1185">Reference proteome</keyword>
<keyword id="KW-1145">T=7 icosahedral capsid protein</keyword>
<keyword id="KW-1161">Viral attachment to host cell</keyword>
<keyword id="KW-1162">Viral penetration into host cytoplasm</keyword>
<keyword id="KW-0946">Virion</keyword>
<keyword id="KW-1164">Virus endocytosis by host</keyword>
<keyword id="KW-1160">Virus entry into host cell</keyword>
<accession>Q05137</accession>
<protein>
    <recommendedName>
        <fullName evidence="1">Major capsid protein L1</fullName>
    </recommendedName>
</protein>
<reference key="1">
    <citation type="journal article" date="1994" name="Curr. Top. Microbiol. Immunol.">
        <title>Primer-directed sequencing of human papillomavirus types.</title>
        <authorList>
            <person name="Delius H."/>
            <person name="Hofmann B."/>
        </authorList>
    </citation>
    <scope>NUCLEOTIDE SEQUENCE [GENOMIC DNA]</scope>
</reference>
<reference key="2">
    <citation type="journal article" date="1992" name="J. Virol.">
        <title>Phylogenetic analysis of 48 papillomavirus types and 28 subtypes and variants: a showcase for the molecular evolution of DNA viruses.</title>
        <authorList>
            <person name="Chan S.-Y."/>
            <person name="Bernard H.U."/>
            <person name="Ong C.K."/>
            <person name="Chan S.P."/>
            <person name="Birgit H."/>
            <person name="Delius H."/>
        </authorList>
    </citation>
    <scope>NUCLEOTIDE SEQUENCE [GENOMIC DNA] OF 312-355</scope>
</reference>
<dbReference type="EMBL" id="X74468">
    <property type="protein sequence ID" value="CAA52511.1"/>
    <property type="molecule type" value="Genomic_DNA"/>
</dbReference>
<dbReference type="EMBL" id="M96284">
    <property type="protein sequence ID" value="AAA47023.1"/>
    <property type="molecule type" value="Genomic_DNA"/>
</dbReference>
<dbReference type="PIR" id="S36478">
    <property type="entry name" value="S36478"/>
</dbReference>
<dbReference type="SMR" id="Q05137"/>
<dbReference type="Proteomes" id="UP000008232">
    <property type="component" value="Genome"/>
</dbReference>
<dbReference type="GO" id="GO:0042025">
    <property type="term" value="C:host cell nucleus"/>
    <property type="evidence" value="ECO:0007669"/>
    <property type="project" value="UniProtKB-SubCell"/>
</dbReference>
<dbReference type="GO" id="GO:0039620">
    <property type="term" value="C:T=7 icosahedral viral capsid"/>
    <property type="evidence" value="ECO:0007669"/>
    <property type="project" value="UniProtKB-UniRule"/>
</dbReference>
<dbReference type="GO" id="GO:0005198">
    <property type="term" value="F:structural molecule activity"/>
    <property type="evidence" value="ECO:0007669"/>
    <property type="project" value="UniProtKB-UniRule"/>
</dbReference>
<dbReference type="GO" id="GO:0075509">
    <property type="term" value="P:endocytosis involved in viral entry into host cell"/>
    <property type="evidence" value="ECO:0007669"/>
    <property type="project" value="UniProtKB-KW"/>
</dbReference>
<dbReference type="GO" id="GO:0019062">
    <property type="term" value="P:virion attachment to host cell"/>
    <property type="evidence" value="ECO:0007669"/>
    <property type="project" value="UniProtKB-UniRule"/>
</dbReference>
<dbReference type="Gene3D" id="2.60.175.20">
    <property type="entry name" value="Major capsid L1 (late) superfamily, Papillomavirus"/>
    <property type="match status" value="2"/>
</dbReference>
<dbReference type="HAMAP" id="MF_04002">
    <property type="entry name" value="PPV_L1"/>
    <property type="match status" value="1"/>
</dbReference>
<dbReference type="InterPro" id="IPR002210">
    <property type="entry name" value="Capsid_L1_Papillomavir"/>
</dbReference>
<dbReference type="InterPro" id="IPR036973">
    <property type="entry name" value="Capsid_L1_sf_Papillomavir"/>
</dbReference>
<dbReference type="InterPro" id="IPR011222">
    <property type="entry name" value="dsDNA_vir_gr_I_capsid"/>
</dbReference>
<dbReference type="Pfam" id="PF00500">
    <property type="entry name" value="Late_protein_L1"/>
    <property type="match status" value="1"/>
</dbReference>
<dbReference type="PRINTS" id="PR00865">
    <property type="entry name" value="HPVCAPSIDL1"/>
</dbReference>
<dbReference type="SUPFAM" id="SSF88648">
    <property type="entry name" value="Group I dsDNA viruses"/>
    <property type="match status" value="1"/>
</dbReference>
<organism>
    <name type="scientific">Human papillomavirus 15</name>
    <dbReference type="NCBI Taxonomy" id="10606"/>
    <lineage>
        <taxon>Viruses</taxon>
        <taxon>Monodnaviria</taxon>
        <taxon>Shotokuvirae</taxon>
        <taxon>Cossaviricota</taxon>
        <taxon>Papovaviricetes</taxon>
        <taxon>Zurhausenvirales</taxon>
        <taxon>Papillomaviridae</taxon>
        <taxon>Firstpapillomavirinae</taxon>
        <taxon>Betapapillomavirus</taxon>
        <taxon>Betapapillomavirus 2</taxon>
    </lineage>
</organism>
<sequence length="507" mass="57220">MTLWLPTTGKVYLPPTPPVARVQSTDEYVERTNVFYHAMSDRLLTVGHPYFDVRSVNGGSIEVPKVSGNQYRAFRVTFPDPNRFALADMSVYNPEKERLVWACVGLEIGRGQPLGVGTSGHPLFNKVKDTENNSNYQGNSTDDRQNTSFDPKQVQMFVVGCVPCLGEHWDRALVCESERNNQAGKCPPLELKNTVIEDGDMFDIGFGNINNKALSVTKSDVSLDIVNETCKYPDFLTMANDVYGDACFFFARREQCYARHYFVRGGAVGDALPDAAVNQDHNFYLPAQSTQQQNNLANSTYFPTVSGSLVTSDAQLFNRPFWLRRAQGHNNGILWGNQMFITVADNTRNTNFTISVTSDGNAINEYNSQNIREFLRHVEEYQLSIILQLCKIPLKAEVLTQINAMNSGILEDWQLGFVPTPDNAVQDIYRYIDSKATKCPDAVQPKDKEDPFGKYTFWNVDLTEKLSLDLDQYPLGRKFIFQAGLQRRPRTIKSSVKVSKGTKRKRT</sequence>
<evidence type="ECO:0000255" key="1">
    <source>
        <dbReference type="HAMAP-Rule" id="MF_04002"/>
    </source>
</evidence>
<evidence type="ECO:0000256" key="2">
    <source>
        <dbReference type="SAM" id="MobiDB-lite"/>
    </source>
</evidence>